<organism>
    <name type="scientific">Salmo salar</name>
    <name type="common">Atlantic salmon</name>
    <dbReference type="NCBI Taxonomy" id="8030"/>
    <lineage>
        <taxon>Eukaryota</taxon>
        <taxon>Metazoa</taxon>
        <taxon>Chordata</taxon>
        <taxon>Craniata</taxon>
        <taxon>Vertebrata</taxon>
        <taxon>Euteleostomi</taxon>
        <taxon>Actinopterygii</taxon>
        <taxon>Neopterygii</taxon>
        <taxon>Teleostei</taxon>
        <taxon>Protacanthopterygii</taxon>
        <taxon>Salmoniformes</taxon>
        <taxon>Salmonidae</taxon>
        <taxon>Salmoninae</taxon>
        <taxon>Salmo</taxon>
    </lineage>
</organism>
<dbReference type="EMBL" id="BT044972">
    <property type="protein sequence ID" value="ACI33234.1"/>
    <property type="molecule type" value="mRNA"/>
</dbReference>
<dbReference type="SMR" id="B5X1Q3"/>
<dbReference type="STRING" id="8030.ENSSSAP00000089960"/>
<dbReference type="GlyCosmos" id="B5X1Q3">
    <property type="glycosylation" value="2 sites, No reported glycans"/>
</dbReference>
<dbReference type="PaxDb" id="8030-ENSSSAP00000089960"/>
<dbReference type="Ensembl" id="ENSSSAT00020143233">
    <property type="protein sequence ID" value="ENSSSAP00020110033"/>
    <property type="gene ID" value="ENSSSAG00020062393"/>
</dbReference>
<dbReference type="Ensembl" id="ENSSSAT00070022972">
    <property type="protein sequence ID" value="ENSSSAP00070021941"/>
    <property type="gene ID" value="ENSSSAG00070014394"/>
</dbReference>
<dbReference type="Ensembl" id="ENSSSAT00075059200">
    <property type="protein sequence ID" value="ENSSSAP00075041564"/>
    <property type="gene ID" value="ENSSSAG00075028338"/>
</dbReference>
<dbReference type="KEGG" id="sasa:106582973"/>
<dbReference type="OrthoDB" id="546988at7898"/>
<dbReference type="Proteomes" id="UP000087266">
    <property type="component" value="Chromosome ssa22"/>
</dbReference>
<dbReference type="Bgee" id="ENSSSAG00000070721">
    <property type="expression patterns" value="Expressed in pituitary gland and 18 other cell types or tissues"/>
</dbReference>
<dbReference type="GO" id="GO:0005576">
    <property type="term" value="C:extracellular region"/>
    <property type="evidence" value="ECO:0007669"/>
    <property type="project" value="UniProtKB-SubCell"/>
</dbReference>
<dbReference type="GO" id="GO:0007411">
    <property type="term" value="P:axon guidance"/>
    <property type="evidence" value="ECO:0007669"/>
    <property type="project" value="UniProtKB-UniRule"/>
</dbReference>
<dbReference type="GO" id="GO:0021528">
    <property type="term" value="P:commissural neuron differentiation in spinal cord"/>
    <property type="evidence" value="ECO:0007669"/>
    <property type="project" value="UniProtKB-UniRule"/>
</dbReference>
<dbReference type="GO" id="GO:0021516">
    <property type="term" value="P:dorsal spinal cord development"/>
    <property type="evidence" value="ECO:0007669"/>
    <property type="project" value="UniProtKB-UniRule"/>
</dbReference>
<dbReference type="GO" id="GO:0030900">
    <property type="term" value="P:forebrain development"/>
    <property type="evidence" value="ECO:0007669"/>
    <property type="project" value="UniProtKB-UniRule"/>
</dbReference>
<dbReference type="GO" id="GO:0016055">
    <property type="term" value="P:Wnt signaling pathway"/>
    <property type="evidence" value="ECO:0007669"/>
    <property type="project" value="InterPro"/>
</dbReference>
<dbReference type="HAMAP" id="MF_03060">
    <property type="entry name" value="Draxin"/>
    <property type="match status" value="1"/>
</dbReference>
<dbReference type="InterPro" id="IPR029094">
    <property type="entry name" value="Draxin"/>
</dbReference>
<dbReference type="PANTHER" id="PTHR28610">
    <property type="entry name" value="DRAXIN"/>
    <property type="match status" value="1"/>
</dbReference>
<dbReference type="PANTHER" id="PTHR28610:SF1">
    <property type="entry name" value="DRAXIN"/>
    <property type="match status" value="1"/>
</dbReference>
<dbReference type="Pfam" id="PF15550">
    <property type="entry name" value="Draxin"/>
    <property type="match status" value="1"/>
</dbReference>
<protein>
    <recommendedName>
        <fullName evidence="1">Draxin-B</fullName>
    </recommendedName>
    <alternativeName>
        <fullName evidence="1">Dorsal inhibitory axon guidance protein B</fullName>
    </alternativeName>
    <alternativeName>
        <fullName evidence="1">Dorsal repulsive axon guidance protein B</fullName>
    </alternativeName>
</protein>
<proteinExistence type="evidence at transcript level"/>
<gene>
    <name type="primary">draxin-B</name>
</gene>
<evidence type="ECO:0000255" key="1">
    <source>
        <dbReference type="HAMAP-Rule" id="MF_03060"/>
    </source>
</evidence>
<evidence type="ECO:0000256" key="2">
    <source>
        <dbReference type="SAM" id="MobiDB-lite"/>
    </source>
</evidence>
<keyword id="KW-0217">Developmental protein</keyword>
<keyword id="KW-0325">Glycoprotein</keyword>
<keyword id="KW-1185">Reference proteome</keyword>
<keyword id="KW-0964">Secreted</keyword>
<keyword id="KW-0732">Signal</keyword>
<name>DRXIB_SALSA</name>
<comment type="function">
    <text evidence="1">Chemorepulsive axon guidance protein required for the development of spinal cord and forebrain commissures. Acts as a chemorepulsive guidance protein for commissural axons during development. Able to inhibit or repel neurite outgrowth from dorsal spinal cord.</text>
</comment>
<comment type="subcellular location">
    <subcellularLocation>
        <location evidence="1">Secreted</location>
    </subcellularLocation>
</comment>
<comment type="similarity">
    <text evidence="1">Belongs to the draxin family.</text>
</comment>
<accession>B5X1Q3</accession>
<feature type="signal peptide" evidence="1">
    <location>
        <begin position="1"/>
        <end position="21"/>
    </location>
</feature>
<feature type="chain" id="PRO_0000365951" description="Draxin-B">
    <location>
        <begin position="22"/>
        <end position="353"/>
    </location>
</feature>
<feature type="region of interest" description="Disordered" evidence="2">
    <location>
        <begin position="23"/>
        <end position="183"/>
    </location>
</feature>
<feature type="region of interest" description="Disordered" evidence="2">
    <location>
        <begin position="198"/>
        <end position="222"/>
    </location>
</feature>
<feature type="region of interest" description="Disordered" evidence="2">
    <location>
        <begin position="246"/>
        <end position="268"/>
    </location>
</feature>
<feature type="compositionally biased region" description="Basic residues" evidence="2">
    <location>
        <begin position="138"/>
        <end position="167"/>
    </location>
</feature>
<feature type="compositionally biased region" description="Basic residues" evidence="2">
    <location>
        <begin position="252"/>
        <end position="261"/>
    </location>
</feature>
<feature type="glycosylation site" description="N-linked (GlcNAc...) asparagine" evidence="1">
    <location>
        <position position="262"/>
    </location>
</feature>
<feature type="glycosylation site" description="N-linked (GlcNAc...) asparagine" evidence="1">
    <location>
        <position position="267"/>
    </location>
</feature>
<sequence>MASSWCLPLALLVSNLAVSHSAEPSSTHAKRRLAQPSPGNGNALQYPEQGFQSHGHGNVRERGGRHGGQGAHSAKANTGAGLLSRSPLHPAARHEDDGTGLDGLSPVRLEMGPGGRERENGRGGFRNPSHARENHPLGPHKGKAQGHGHHFDHRRHGGRRDKGRHTKGFFPEPELDSSLKEGSVSSTIFGSGSSAVTTVMSEHPPMLPPASTKPKKSGRGKVQGEVMPTLDMTLFDWTDYEDMKPVDAWPSSRKKDKRRSKNLSSGNVTVDSDAIEPCDHHLDCLPGSCCDLRQHECKLHNRGLNNKCYDDCMCEEGFRCYAKFHRKLHVTRRRGRCVVPESANRDQGAFITV</sequence>
<reference key="1">
    <citation type="journal article" date="2010" name="BMC Genomics">
        <title>Salmo salar and Esox lucius full-length cDNA sequences reveal changes in evolutionary pressures on a post-tetraploidization genome.</title>
        <authorList>
            <person name="Leong J.S."/>
            <person name="Jantzen S.G."/>
            <person name="von Schalburg K.R."/>
            <person name="Cooper G.A."/>
            <person name="Messmer A.M."/>
            <person name="Liao N.Y."/>
            <person name="Munro S."/>
            <person name="Moore R."/>
            <person name="Holt R.A."/>
            <person name="Jones S.J."/>
            <person name="Davidson W.S."/>
            <person name="Koop B.F."/>
        </authorList>
    </citation>
    <scope>NUCLEOTIDE SEQUENCE [LARGE SCALE MRNA]</scope>
    <source>
        <tissue>Brain</tissue>
    </source>
</reference>